<protein>
    <recommendedName>
        <fullName evidence="1">Methionine aminopeptidase 2-1</fullName>
        <shortName evidence="1">MAP 2-1</shortName>
        <shortName evidence="1">MetAP 2-1</shortName>
        <ecNumber evidence="1">3.4.11.18</ecNumber>
    </recommendedName>
    <alternativeName>
        <fullName evidence="1">Peptidase M</fullName>
    </alternativeName>
</protein>
<proteinExistence type="inferred from homology"/>
<evidence type="ECO:0000255" key="1">
    <source>
        <dbReference type="HAMAP-Rule" id="MF_03175"/>
    </source>
</evidence>
<evidence type="ECO:0000256" key="2">
    <source>
        <dbReference type="SAM" id="MobiDB-lite"/>
    </source>
</evidence>
<keyword id="KW-0031">Aminopeptidase</keyword>
<keyword id="KW-0963">Cytoplasm</keyword>
<keyword id="KW-0378">Hydrolase</keyword>
<keyword id="KW-0479">Metal-binding</keyword>
<keyword id="KW-0645">Protease</keyword>
<keyword id="KW-1185">Reference proteome</keyword>
<gene>
    <name type="ORF">Pc14g00010</name>
</gene>
<comment type="function">
    <text evidence="1">Cotranslationally removes the N-terminal methionine from nascent proteins. The N-terminal methionine is often cleaved when the second residue in the primary sequence is small and uncharged (Met-Ala-, Cys, Gly, Pro, Ser, Thr, or Val).</text>
</comment>
<comment type="catalytic activity">
    <reaction evidence="1">
        <text>Release of N-terminal amino acids, preferentially methionine, from peptides and arylamides.</text>
        <dbReference type="EC" id="3.4.11.18"/>
    </reaction>
</comment>
<comment type="cofactor">
    <cofactor evidence="1">
        <name>Co(2+)</name>
        <dbReference type="ChEBI" id="CHEBI:48828"/>
    </cofactor>
    <cofactor evidence="1">
        <name>Zn(2+)</name>
        <dbReference type="ChEBI" id="CHEBI:29105"/>
    </cofactor>
    <cofactor evidence="1">
        <name>Mn(2+)</name>
        <dbReference type="ChEBI" id="CHEBI:29035"/>
    </cofactor>
    <cofactor evidence="1">
        <name>Fe(2+)</name>
        <dbReference type="ChEBI" id="CHEBI:29033"/>
    </cofactor>
    <text evidence="1">Binds 2 divalent metal cations per subunit. Has a high-affinity and a low affinity metal-binding site. The true nature of the physiological cofactor is under debate. The enzyme is active with cobalt, zinc, manganese or divalent iron ions. Most likely, methionine aminopeptidases function as mononuclear Fe(2+)-metalloproteases under physiological conditions, and the catalytically relevant metal-binding site has been assigned to the histidine-containing high-affinity site.</text>
</comment>
<comment type="subcellular location">
    <subcellularLocation>
        <location evidence="1">Cytoplasm</location>
    </subcellularLocation>
</comment>
<comment type="similarity">
    <text evidence="1">Belongs to the peptidase M24A family. Methionine aminopeptidase eukaryotic type 2 subfamily.</text>
</comment>
<organism>
    <name type="scientific">Penicillium rubens (strain ATCC 28089 / DSM 1075 / NRRL 1951 / Wisconsin 54-1255)</name>
    <name type="common">Penicillium chrysogenum</name>
    <dbReference type="NCBI Taxonomy" id="500485"/>
    <lineage>
        <taxon>Eukaryota</taxon>
        <taxon>Fungi</taxon>
        <taxon>Dikarya</taxon>
        <taxon>Ascomycota</taxon>
        <taxon>Pezizomycotina</taxon>
        <taxon>Eurotiomycetes</taxon>
        <taxon>Eurotiomycetidae</taxon>
        <taxon>Eurotiales</taxon>
        <taxon>Aspergillaceae</taxon>
        <taxon>Penicillium</taxon>
        <taxon>Penicillium chrysogenum species complex</taxon>
    </lineage>
</organism>
<name>MAP21_PENRW</name>
<sequence>MGSKTAENESQGGGNAPPSSTKATATGGEPRGAHWSRDGDGTLGEGEGDDDADGDNTSCAPAVPLNPQTAPSTNSKKRKKRPKKKTSALKQSSPPRIPLADLFPDHQYPHGEAQVYEPGLENVARTTADEVRHHSRHHIEDDTFLNDYRKAAEVHRQVRRWTQESVRPGQTLTEIAMGIEDGVRALLDNAGLDTGQGLISGLGFPTGLSLNNCVAHYTPNPGQREVVLDSSDVMKVDFGVHINGWIVDSAFTMSFDPTYDNLLAAVKDATNTGIKNAGVDVRISDVSAAIQEAMESYEVDINGRTFPVKAVRNITGHNIEQYRIHAGKSIPFVKNNDNTKMEEGEIFAIETFGTTGRGYLFDGPGVYGYGKDPSAPKRITSHLASAKSLYQKINENFGSLVFCRRYLERLGVESYLAGMNNLVSNGYVEVYQPLMDVRGSYSAQFEHTILLRESCKEVISRGDDY</sequence>
<dbReference type="EC" id="3.4.11.18" evidence="1"/>
<dbReference type="EMBL" id="AM920429">
    <property type="protein sequence ID" value="CAP74142.1"/>
    <property type="molecule type" value="Genomic_DNA"/>
</dbReference>
<dbReference type="RefSeq" id="XP_002559996.1">
    <property type="nucleotide sequence ID" value="XM_002559950.1"/>
</dbReference>
<dbReference type="SMR" id="B6H5L5"/>
<dbReference type="STRING" id="500485.B6H5L5"/>
<dbReference type="VEuPathDB" id="FungiDB:PCH_Pc14g00010"/>
<dbReference type="eggNOG" id="KOG2775">
    <property type="taxonomic scope" value="Eukaryota"/>
</dbReference>
<dbReference type="HOGENOM" id="CLU_015857_7_1_1"/>
<dbReference type="OMA" id="ILRYHIH"/>
<dbReference type="OrthoDB" id="7848262at2759"/>
<dbReference type="BioCyc" id="PCHR:PC14G00010-MONOMER"/>
<dbReference type="Proteomes" id="UP000000724">
    <property type="component" value="Contig Pc00c14"/>
</dbReference>
<dbReference type="GO" id="GO:0005737">
    <property type="term" value="C:cytoplasm"/>
    <property type="evidence" value="ECO:0007669"/>
    <property type="project" value="UniProtKB-SubCell"/>
</dbReference>
<dbReference type="GO" id="GO:0004239">
    <property type="term" value="F:initiator methionyl aminopeptidase activity"/>
    <property type="evidence" value="ECO:0007669"/>
    <property type="project" value="UniProtKB-UniRule"/>
</dbReference>
<dbReference type="GO" id="GO:0046872">
    <property type="term" value="F:metal ion binding"/>
    <property type="evidence" value="ECO:0007669"/>
    <property type="project" value="UniProtKB-UniRule"/>
</dbReference>
<dbReference type="GO" id="GO:0070006">
    <property type="term" value="F:metalloaminopeptidase activity"/>
    <property type="evidence" value="ECO:0007669"/>
    <property type="project" value="UniProtKB-UniRule"/>
</dbReference>
<dbReference type="GO" id="GO:0006508">
    <property type="term" value="P:proteolysis"/>
    <property type="evidence" value="ECO:0007669"/>
    <property type="project" value="UniProtKB-KW"/>
</dbReference>
<dbReference type="CDD" id="cd01088">
    <property type="entry name" value="MetAP2"/>
    <property type="match status" value="1"/>
</dbReference>
<dbReference type="Gene3D" id="3.90.230.10">
    <property type="entry name" value="Creatinase/methionine aminopeptidase superfamily"/>
    <property type="match status" value="1"/>
</dbReference>
<dbReference type="Gene3D" id="1.10.10.10">
    <property type="entry name" value="Winged helix-like DNA-binding domain superfamily/Winged helix DNA-binding domain"/>
    <property type="match status" value="1"/>
</dbReference>
<dbReference type="HAMAP" id="MF_03175">
    <property type="entry name" value="MetAP_2_euk"/>
    <property type="match status" value="1"/>
</dbReference>
<dbReference type="InterPro" id="IPR036005">
    <property type="entry name" value="Creatinase/aminopeptidase-like"/>
</dbReference>
<dbReference type="InterPro" id="IPR050247">
    <property type="entry name" value="Met_Aminopeptidase_Type2"/>
</dbReference>
<dbReference type="InterPro" id="IPR000994">
    <property type="entry name" value="Pept_M24"/>
</dbReference>
<dbReference type="InterPro" id="IPR001714">
    <property type="entry name" value="Pept_M24_MAP"/>
</dbReference>
<dbReference type="InterPro" id="IPR002468">
    <property type="entry name" value="Pept_M24A_MAP2"/>
</dbReference>
<dbReference type="InterPro" id="IPR018349">
    <property type="entry name" value="Pept_M24A_MAP2_BS"/>
</dbReference>
<dbReference type="InterPro" id="IPR036388">
    <property type="entry name" value="WH-like_DNA-bd_sf"/>
</dbReference>
<dbReference type="InterPro" id="IPR036390">
    <property type="entry name" value="WH_DNA-bd_sf"/>
</dbReference>
<dbReference type="NCBIfam" id="TIGR00501">
    <property type="entry name" value="met_pdase_II"/>
    <property type="match status" value="1"/>
</dbReference>
<dbReference type="PANTHER" id="PTHR45777">
    <property type="entry name" value="METHIONINE AMINOPEPTIDASE 2"/>
    <property type="match status" value="1"/>
</dbReference>
<dbReference type="PANTHER" id="PTHR45777:SF1">
    <property type="entry name" value="METHIONINE AMINOPEPTIDASE 2-2"/>
    <property type="match status" value="1"/>
</dbReference>
<dbReference type="Pfam" id="PF00557">
    <property type="entry name" value="Peptidase_M24"/>
    <property type="match status" value="1"/>
</dbReference>
<dbReference type="PRINTS" id="PR00599">
    <property type="entry name" value="MAPEPTIDASE"/>
</dbReference>
<dbReference type="SUPFAM" id="SSF55920">
    <property type="entry name" value="Creatinase/aminopeptidase"/>
    <property type="match status" value="1"/>
</dbReference>
<dbReference type="SUPFAM" id="SSF46785">
    <property type="entry name" value="Winged helix' DNA-binding domain"/>
    <property type="match status" value="1"/>
</dbReference>
<dbReference type="PROSITE" id="PS01202">
    <property type="entry name" value="MAP_2"/>
    <property type="match status" value="1"/>
</dbReference>
<reference key="1">
    <citation type="journal article" date="2008" name="Nat. Biotechnol.">
        <title>Genome sequencing and analysis of the filamentous fungus Penicillium chrysogenum.</title>
        <authorList>
            <person name="van den Berg M.A."/>
            <person name="Albang R."/>
            <person name="Albermann K."/>
            <person name="Badger J.H."/>
            <person name="Daran J.-M."/>
            <person name="Driessen A.J.M."/>
            <person name="Garcia-Estrada C."/>
            <person name="Fedorova N.D."/>
            <person name="Harris D.M."/>
            <person name="Heijne W.H.M."/>
            <person name="Joardar V.S."/>
            <person name="Kiel J.A.K.W."/>
            <person name="Kovalchuk A."/>
            <person name="Martin J.F."/>
            <person name="Nierman W.C."/>
            <person name="Nijland J.G."/>
            <person name="Pronk J.T."/>
            <person name="Roubos J.A."/>
            <person name="van der Klei I.J."/>
            <person name="van Peij N.N.M.E."/>
            <person name="Veenhuis M."/>
            <person name="von Doehren H."/>
            <person name="Wagner C."/>
            <person name="Wortman J.R."/>
            <person name="Bovenberg R.A.L."/>
        </authorList>
    </citation>
    <scope>NUCLEOTIDE SEQUENCE [LARGE SCALE GENOMIC DNA]</scope>
    <source>
        <strain>ATCC 28089 / DSM 1075 / NRRL 1951 / Wisconsin 54-1255</strain>
    </source>
</reference>
<accession>B6H5L5</accession>
<feature type="chain" id="PRO_0000407632" description="Methionine aminopeptidase 2-1">
    <location>
        <begin position="1"/>
        <end position="465"/>
    </location>
</feature>
<feature type="region of interest" description="Disordered" evidence="2">
    <location>
        <begin position="1"/>
        <end position="100"/>
    </location>
</feature>
<feature type="compositionally biased region" description="Basic and acidic residues" evidence="2">
    <location>
        <begin position="31"/>
        <end position="40"/>
    </location>
</feature>
<feature type="compositionally biased region" description="Basic residues" evidence="2">
    <location>
        <begin position="75"/>
        <end position="87"/>
    </location>
</feature>
<feature type="binding site" evidence="1">
    <location>
        <position position="216"/>
    </location>
    <ligand>
        <name>substrate</name>
    </ligand>
</feature>
<feature type="binding site" evidence="1">
    <location>
        <position position="237"/>
    </location>
    <ligand>
        <name>a divalent metal cation</name>
        <dbReference type="ChEBI" id="CHEBI:60240"/>
        <label>1</label>
    </ligand>
</feature>
<feature type="binding site" evidence="1">
    <location>
        <position position="248"/>
    </location>
    <ligand>
        <name>a divalent metal cation</name>
        <dbReference type="ChEBI" id="CHEBI:60240"/>
        <label>1</label>
    </ligand>
</feature>
<feature type="binding site" evidence="1">
    <location>
        <position position="248"/>
    </location>
    <ligand>
        <name>a divalent metal cation</name>
        <dbReference type="ChEBI" id="CHEBI:60240"/>
        <label>2</label>
        <note>catalytic</note>
    </ligand>
</feature>
<feature type="binding site" evidence="1">
    <location>
        <position position="317"/>
    </location>
    <ligand>
        <name>a divalent metal cation</name>
        <dbReference type="ChEBI" id="CHEBI:60240"/>
        <label>2</label>
        <note>catalytic</note>
    </ligand>
</feature>
<feature type="binding site" evidence="1">
    <location>
        <position position="325"/>
    </location>
    <ligand>
        <name>substrate</name>
    </ligand>
</feature>
<feature type="binding site" evidence="1">
    <location>
        <position position="350"/>
    </location>
    <ligand>
        <name>a divalent metal cation</name>
        <dbReference type="ChEBI" id="CHEBI:60240"/>
        <label>2</label>
        <note>catalytic</note>
    </ligand>
</feature>
<feature type="binding site" evidence="1">
    <location>
        <position position="446"/>
    </location>
    <ligand>
        <name>a divalent metal cation</name>
        <dbReference type="ChEBI" id="CHEBI:60240"/>
        <label>1</label>
    </ligand>
</feature>
<feature type="binding site" evidence="1">
    <location>
        <position position="446"/>
    </location>
    <ligand>
        <name>a divalent metal cation</name>
        <dbReference type="ChEBI" id="CHEBI:60240"/>
        <label>2</label>
        <note>catalytic</note>
    </ligand>
</feature>